<organism>
    <name type="scientific">Trittame loki</name>
    <name type="common">Brush-footed trapdoor spider</name>
    <dbReference type="NCBI Taxonomy" id="1295018"/>
    <lineage>
        <taxon>Eukaryota</taxon>
        <taxon>Metazoa</taxon>
        <taxon>Ecdysozoa</taxon>
        <taxon>Arthropoda</taxon>
        <taxon>Chelicerata</taxon>
        <taxon>Arachnida</taxon>
        <taxon>Araneae</taxon>
        <taxon>Mygalomorphae</taxon>
        <taxon>Barychelidae</taxon>
        <taxon>Trittame</taxon>
    </lineage>
</organism>
<feature type="signal peptide" evidence="2">
    <location>
        <begin position="1"/>
        <end position="20"/>
    </location>
</feature>
<feature type="propeptide" id="PRO_0000435151" evidence="4">
    <location>
        <begin position="21"/>
        <end position="74"/>
    </location>
</feature>
<feature type="chain" id="PRO_0000429235" description="U16-barytoxin-Tl1d">
    <location>
        <begin position="75"/>
        <end position="116"/>
    </location>
</feature>
<feature type="disulfide bond" evidence="1">
    <location>
        <begin position="75"/>
        <end position="90"/>
    </location>
</feature>
<feature type="disulfide bond" evidence="1">
    <location>
        <begin position="82"/>
        <end position="95"/>
    </location>
</feature>
<feature type="disulfide bond" evidence="1">
    <location>
        <begin position="89"/>
        <end position="110"/>
    </location>
</feature>
<protein>
    <recommendedName>
        <fullName>U16-barytoxin-Tl1d</fullName>
        <shortName>U16-BATX-Tl1d</shortName>
    </recommendedName>
    <alternativeName>
        <fullName evidence="3">Toxin ICK-28</fullName>
    </alternativeName>
</protein>
<accession>W4VSI4</accession>
<keyword id="KW-0165">Cleavage on pair of basic residues</keyword>
<keyword id="KW-1015">Disulfide bond</keyword>
<keyword id="KW-0872">Ion channel impairing toxin</keyword>
<keyword id="KW-0960">Knottin</keyword>
<keyword id="KW-0964">Secreted</keyword>
<keyword id="KW-0732">Signal</keyword>
<keyword id="KW-0800">Toxin</keyword>
<evidence type="ECO:0000250" key="1"/>
<evidence type="ECO:0000255" key="2"/>
<evidence type="ECO:0000303" key="3">
    <source>
    </source>
</evidence>
<evidence type="ECO:0000305" key="4"/>
<reference key="1">
    <citation type="journal article" date="2013" name="Toxins">
        <title>A proteomics and transcriptomics investigation of the venom from the barychelid spider Trittame loki (brush-foot trapdoor).</title>
        <authorList>
            <person name="Undheim E.A."/>
            <person name="Sunagar K."/>
            <person name="Herzig V."/>
            <person name="Kely L."/>
            <person name="Low D.H."/>
            <person name="Jackson T.N."/>
            <person name="Jones A."/>
            <person name="Kurniawan N."/>
            <person name="King G.F."/>
            <person name="Ali S.A."/>
            <person name="Antunes A."/>
            <person name="Ruder T."/>
            <person name="Fry B.G."/>
        </authorList>
    </citation>
    <scope>NUCLEOTIDE SEQUENCE [MRNA]</scope>
    <source>
        <tissue>Venom gland</tissue>
    </source>
</reference>
<comment type="function">
    <text evidence="4">Ion channel inhibitor.</text>
</comment>
<comment type="subcellular location">
    <subcellularLocation>
        <location evidence="1">Secreted</location>
    </subcellularLocation>
</comment>
<comment type="tissue specificity">
    <text>Expressed by the venom gland.</text>
</comment>
<comment type="domain">
    <text evidence="1">The presence of a 'disulfide through disulfide knot' structurally defines this protein as a knottin.</text>
</comment>
<comment type="similarity">
    <text evidence="4">Belongs to the neurotoxin 14 (magi-1) family. 06 (ICK-Trit) subfamily.</text>
</comment>
<name>ICK28_TRILK</name>
<proteinExistence type="evidence at transcript level"/>
<dbReference type="EMBL" id="GAQE01000031">
    <property type="protein sequence ID" value="JAB84523.1"/>
    <property type="molecule type" value="Transcribed_RNA"/>
</dbReference>
<dbReference type="SMR" id="W4VSI4"/>
<dbReference type="ArachnoServer" id="AS001520">
    <property type="toxin name" value="U16-barytoxin-Tl1d"/>
</dbReference>
<dbReference type="GO" id="GO:0005576">
    <property type="term" value="C:extracellular region"/>
    <property type="evidence" value="ECO:0007669"/>
    <property type="project" value="UniProtKB-SubCell"/>
</dbReference>
<dbReference type="GO" id="GO:0019871">
    <property type="term" value="F:sodium channel inhibitor activity"/>
    <property type="evidence" value="ECO:0007669"/>
    <property type="project" value="InterPro"/>
</dbReference>
<dbReference type="GO" id="GO:0090729">
    <property type="term" value="F:toxin activity"/>
    <property type="evidence" value="ECO:0007669"/>
    <property type="project" value="UniProtKB-KW"/>
</dbReference>
<dbReference type="InterPro" id="IPR012627">
    <property type="entry name" value="Toxin_22"/>
</dbReference>
<dbReference type="Pfam" id="PF08092">
    <property type="entry name" value="Toxin_22"/>
    <property type="match status" value="1"/>
</dbReference>
<sequence length="116" mass="13124">MKTIIVFLSLLVLATKFGDANEGVNQEQMKEVIQNEFREDFLNEMAAMSLLQQLEAIESTLLEKEADRNSRQKRCNGNNVPCGPDHPPCCSGLSCEKTFGYGWWYKSPYCVRPSKG</sequence>